<organism>
    <name type="scientific">Thermoanaerobacter sp. (strain X514)</name>
    <dbReference type="NCBI Taxonomy" id="399726"/>
    <lineage>
        <taxon>Bacteria</taxon>
        <taxon>Bacillati</taxon>
        <taxon>Bacillota</taxon>
        <taxon>Clostridia</taxon>
        <taxon>Thermoanaerobacterales</taxon>
        <taxon>Thermoanaerobacteraceae</taxon>
        <taxon>Thermoanaerobacter</taxon>
    </lineage>
</organism>
<evidence type="ECO:0000255" key="1">
    <source>
        <dbReference type="HAMAP-Rule" id="MF_00251"/>
    </source>
</evidence>
<evidence type="ECO:0000305" key="2"/>
<gene>
    <name evidence="1" type="primary">rpmJ</name>
    <name type="ordered locus">Teth514_0891</name>
</gene>
<accession>B0K5R7</accession>
<sequence length="37" mass="4305">MKVRPSVKPICEKCKVIKRKGRVMVICENPKHKQKQG</sequence>
<name>RL36_THEPX</name>
<reference key="1">
    <citation type="submission" date="2008-01" db="EMBL/GenBank/DDBJ databases">
        <title>Complete sequence of Thermoanaerobacter sp. X514.</title>
        <authorList>
            <consortium name="US DOE Joint Genome Institute"/>
            <person name="Copeland A."/>
            <person name="Lucas S."/>
            <person name="Lapidus A."/>
            <person name="Barry K."/>
            <person name="Glavina del Rio T."/>
            <person name="Dalin E."/>
            <person name="Tice H."/>
            <person name="Pitluck S."/>
            <person name="Bruce D."/>
            <person name="Goodwin L."/>
            <person name="Saunders E."/>
            <person name="Brettin T."/>
            <person name="Detter J.C."/>
            <person name="Han C."/>
            <person name="Schmutz J."/>
            <person name="Larimer F."/>
            <person name="Land M."/>
            <person name="Hauser L."/>
            <person name="Kyrpides N."/>
            <person name="Kim E."/>
            <person name="Hemme C."/>
            <person name="Fields M.W."/>
            <person name="He Z."/>
            <person name="Zhou J."/>
            <person name="Richardson P."/>
        </authorList>
    </citation>
    <scope>NUCLEOTIDE SEQUENCE [LARGE SCALE GENOMIC DNA]</scope>
    <source>
        <strain>X514</strain>
    </source>
</reference>
<comment type="similarity">
    <text evidence="1">Belongs to the bacterial ribosomal protein bL36 family.</text>
</comment>
<comment type="sequence caution" evidence="2">
    <conflict type="erroneous initiation">
        <sequence resource="EMBL-CDS" id="ABY92193"/>
    </conflict>
</comment>
<proteinExistence type="inferred from homology"/>
<protein>
    <recommendedName>
        <fullName evidence="1">Large ribosomal subunit protein bL36</fullName>
    </recommendedName>
    <alternativeName>
        <fullName evidence="2">50S ribosomal protein L36</fullName>
    </alternativeName>
</protein>
<dbReference type="EMBL" id="CP000923">
    <property type="protein sequence ID" value="ABY92193.1"/>
    <property type="status" value="ALT_INIT"/>
    <property type="molecule type" value="Genomic_DNA"/>
</dbReference>
<dbReference type="RefSeq" id="WP_003373491.1">
    <property type="nucleotide sequence ID" value="NC_010320.1"/>
</dbReference>
<dbReference type="SMR" id="B0K5R7"/>
<dbReference type="GeneID" id="93001034"/>
<dbReference type="KEGG" id="tex:Teth514_0891"/>
<dbReference type="HOGENOM" id="CLU_135723_6_1_9"/>
<dbReference type="Proteomes" id="UP000002155">
    <property type="component" value="Chromosome"/>
</dbReference>
<dbReference type="GO" id="GO:0005737">
    <property type="term" value="C:cytoplasm"/>
    <property type="evidence" value="ECO:0007669"/>
    <property type="project" value="UniProtKB-ARBA"/>
</dbReference>
<dbReference type="GO" id="GO:1990904">
    <property type="term" value="C:ribonucleoprotein complex"/>
    <property type="evidence" value="ECO:0007669"/>
    <property type="project" value="UniProtKB-KW"/>
</dbReference>
<dbReference type="GO" id="GO:0005840">
    <property type="term" value="C:ribosome"/>
    <property type="evidence" value="ECO:0007669"/>
    <property type="project" value="UniProtKB-KW"/>
</dbReference>
<dbReference type="GO" id="GO:0003735">
    <property type="term" value="F:structural constituent of ribosome"/>
    <property type="evidence" value="ECO:0007669"/>
    <property type="project" value="InterPro"/>
</dbReference>
<dbReference type="GO" id="GO:0006412">
    <property type="term" value="P:translation"/>
    <property type="evidence" value="ECO:0007669"/>
    <property type="project" value="UniProtKB-UniRule"/>
</dbReference>
<dbReference type="HAMAP" id="MF_00251">
    <property type="entry name" value="Ribosomal_bL36"/>
    <property type="match status" value="1"/>
</dbReference>
<dbReference type="InterPro" id="IPR000473">
    <property type="entry name" value="Ribosomal_bL36"/>
</dbReference>
<dbReference type="InterPro" id="IPR035977">
    <property type="entry name" value="Ribosomal_bL36_sp"/>
</dbReference>
<dbReference type="NCBIfam" id="TIGR01022">
    <property type="entry name" value="rpmJ_bact"/>
    <property type="match status" value="1"/>
</dbReference>
<dbReference type="PANTHER" id="PTHR42888">
    <property type="entry name" value="50S RIBOSOMAL PROTEIN L36, CHLOROPLASTIC"/>
    <property type="match status" value="1"/>
</dbReference>
<dbReference type="PANTHER" id="PTHR42888:SF1">
    <property type="entry name" value="LARGE RIBOSOMAL SUBUNIT PROTEIN BL36C"/>
    <property type="match status" value="1"/>
</dbReference>
<dbReference type="Pfam" id="PF00444">
    <property type="entry name" value="Ribosomal_L36"/>
    <property type="match status" value="1"/>
</dbReference>
<dbReference type="SUPFAM" id="SSF57840">
    <property type="entry name" value="Ribosomal protein L36"/>
    <property type="match status" value="1"/>
</dbReference>
<dbReference type="PROSITE" id="PS00828">
    <property type="entry name" value="RIBOSOMAL_L36"/>
    <property type="match status" value="1"/>
</dbReference>
<keyword id="KW-0687">Ribonucleoprotein</keyword>
<keyword id="KW-0689">Ribosomal protein</keyword>
<feature type="chain" id="PRO_0000344725" description="Large ribosomal subunit protein bL36">
    <location>
        <begin position="1"/>
        <end position="37"/>
    </location>
</feature>